<proteinExistence type="inferred from homology"/>
<gene>
    <name evidence="1" type="primary">tgt</name>
    <name type="ordered locus">YpAngola_A3384</name>
</gene>
<dbReference type="EC" id="2.4.2.29" evidence="1"/>
<dbReference type="EMBL" id="CP000901">
    <property type="protein sequence ID" value="ABX84868.1"/>
    <property type="molecule type" value="Genomic_DNA"/>
</dbReference>
<dbReference type="RefSeq" id="WP_002208672.1">
    <property type="nucleotide sequence ID" value="NZ_CP009935.1"/>
</dbReference>
<dbReference type="SMR" id="A9R351"/>
<dbReference type="GeneID" id="57975522"/>
<dbReference type="KEGG" id="ypg:YpAngola_A3384"/>
<dbReference type="PATRIC" id="fig|349746.12.peg.84"/>
<dbReference type="UniPathway" id="UPA00392"/>
<dbReference type="GO" id="GO:0005829">
    <property type="term" value="C:cytosol"/>
    <property type="evidence" value="ECO:0007669"/>
    <property type="project" value="TreeGrafter"/>
</dbReference>
<dbReference type="GO" id="GO:0046872">
    <property type="term" value="F:metal ion binding"/>
    <property type="evidence" value="ECO:0007669"/>
    <property type="project" value="UniProtKB-KW"/>
</dbReference>
<dbReference type="GO" id="GO:0008479">
    <property type="term" value="F:tRNA-guanosine(34) queuine transglycosylase activity"/>
    <property type="evidence" value="ECO:0007669"/>
    <property type="project" value="UniProtKB-UniRule"/>
</dbReference>
<dbReference type="GO" id="GO:0008616">
    <property type="term" value="P:queuosine biosynthetic process"/>
    <property type="evidence" value="ECO:0007669"/>
    <property type="project" value="UniProtKB-UniRule"/>
</dbReference>
<dbReference type="GO" id="GO:0002099">
    <property type="term" value="P:tRNA wobble guanine modification"/>
    <property type="evidence" value="ECO:0007669"/>
    <property type="project" value="TreeGrafter"/>
</dbReference>
<dbReference type="GO" id="GO:0101030">
    <property type="term" value="P:tRNA-guanine transglycosylation"/>
    <property type="evidence" value="ECO:0007669"/>
    <property type="project" value="InterPro"/>
</dbReference>
<dbReference type="FunFam" id="3.20.20.105:FF:000001">
    <property type="entry name" value="Queuine tRNA-ribosyltransferase"/>
    <property type="match status" value="1"/>
</dbReference>
<dbReference type="Gene3D" id="3.20.20.105">
    <property type="entry name" value="Queuine tRNA-ribosyltransferase-like"/>
    <property type="match status" value="1"/>
</dbReference>
<dbReference type="HAMAP" id="MF_00168">
    <property type="entry name" value="Q_tRNA_Tgt"/>
    <property type="match status" value="1"/>
</dbReference>
<dbReference type="InterPro" id="IPR050076">
    <property type="entry name" value="ArchSynthase1/Queuine_TRR"/>
</dbReference>
<dbReference type="InterPro" id="IPR004803">
    <property type="entry name" value="TGT"/>
</dbReference>
<dbReference type="InterPro" id="IPR036511">
    <property type="entry name" value="TGT-like_sf"/>
</dbReference>
<dbReference type="InterPro" id="IPR002616">
    <property type="entry name" value="tRNA_ribo_trans-like"/>
</dbReference>
<dbReference type="NCBIfam" id="TIGR00430">
    <property type="entry name" value="Q_tRNA_tgt"/>
    <property type="match status" value="1"/>
</dbReference>
<dbReference type="NCBIfam" id="TIGR00449">
    <property type="entry name" value="tgt_general"/>
    <property type="match status" value="1"/>
</dbReference>
<dbReference type="PANTHER" id="PTHR46499">
    <property type="entry name" value="QUEUINE TRNA-RIBOSYLTRANSFERASE"/>
    <property type="match status" value="1"/>
</dbReference>
<dbReference type="PANTHER" id="PTHR46499:SF1">
    <property type="entry name" value="QUEUINE TRNA-RIBOSYLTRANSFERASE"/>
    <property type="match status" value="1"/>
</dbReference>
<dbReference type="Pfam" id="PF01702">
    <property type="entry name" value="TGT"/>
    <property type="match status" value="1"/>
</dbReference>
<dbReference type="SUPFAM" id="SSF51713">
    <property type="entry name" value="tRNA-guanine transglycosylase"/>
    <property type="match status" value="1"/>
</dbReference>
<name>TGT_YERPG</name>
<feature type="chain" id="PRO_1000097582" description="Queuine tRNA-ribosyltransferase">
    <location>
        <begin position="1"/>
        <end position="374"/>
    </location>
</feature>
<feature type="region of interest" description="RNA binding" evidence="1">
    <location>
        <begin position="245"/>
        <end position="251"/>
    </location>
</feature>
<feature type="region of interest" description="RNA binding; important for wobble base 34 recognition" evidence="1">
    <location>
        <begin position="269"/>
        <end position="273"/>
    </location>
</feature>
<feature type="active site" description="Proton acceptor" evidence="1">
    <location>
        <position position="89"/>
    </location>
</feature>
<feature type="active site" description="Nucleophile" evidence="1">
    <location>
        <position position="264"/>
    </location>
</feature>
<feature type="binding site" evidence="1">
    <location>
        <begin position="89"/>
        <end position="93"/>
    </location>
    <ligand>
        <name>substrate</name>
    </ligand>
</feature>
<feature type="binding site" evidence="1">
    <location>
        <position position="143"/>
    </location>
    <ligand>
        <name>substrate</name>
    </ligand>
</feature>
<feature type="binding site" evidence="1">
    <location>
        <position position="187"/>
    </location>
    <ligand>
        <name>substrate</name>
    </ligand>
</feature>
<feature type="binding site" evidence="1">
    <location>
        <position position="214"/>
    </location>
    <ligand>
        <name>substrate</name>
    </ligand>
</feature>
<feature type="binding site" evidence="1">
    <location>
        <position position="302"/>
    </location>
    <ligand>
        <name>Zn(2+)</name>
        <dbReference type="ChEBI" id="CHEBI:29105"/>
    </ligand>
</feature>
<feature type="binding site" evidence="1">
    <location>
        <position position="304"/>
    </location>
    <ligand>
        <name>Zn(2+)</name>
        <dbReference type="ChEBI" id="CHEBI:29105"/>
    </ligand>
</feature>
<feature type="binding site" evidence="1">
    <location>
        <position position="307"/>
    </location>
    <ligand>
        <name>Zn(2+)</name>
        <dbReference type="ChEBI" id="CHEBI:29105"/>
    </ligand>
</feature>
<feature type="binding site" evidence="1">
    <location>
        <position position="333"/>
    </location>
    <ligand>
        <name>Zn(2+)</name>
        <dbReference type="ChEBI" id="CHEBI:29105"/>
    </ligand>
</feature>
<protein>
    <recommendedName>
        <fullName evidence="1">Queuine tRNA-ribosyltransferase</fullName>
        <ecNumber evidence="1">2.4.2.29</ecNumber>
    </recommendedName>
    <alternativeName>
        <fullName evidence="1">Guanine insertion enzyme</fullName>
    </alternativeName>
    <alternativeName>
        <fullName evidence="1">tRNA-guanine transglycosylase</fullName>
    </alternativeName>
</protein>
<keyword id="KW-0328">Glycosyltransferase</keyword>
<keyword id="KW-0479">Metal-binding</keyword>
<keyword id="KW-0671">Queuosine biosynthesis</keyword>
<keyword id="KW-0808">Transferase</keyword>
<keyword id="KW-0819">tRNA processing</keyword>
<keyword id="KW-0862">Zinc</keyword>
<comment type="function">
    <text evidence="1">Catalyzes the base-exchange of a guanine (G) residue with the queuine precursor 7-aminomethyl-7-deazaguanine (PreQ1) at position 34 (anticodon wobble position) in tRNAs with GU(N) anticodons (tRNA-Asp, -Asn, -His and -Tyr). Catalysis occurs through a double-displacement mechanism. The nucleophile active site attacks the C1' of nucleotide 34 to detach the guanine base from the RNA, forming a covalent enzyme-RNA intermediate. The proton acceptor active site deprotonates the incoming PreQ1, allowing a nucleophilic attack on the C1' of the ribose to form the product. After dissociation, two additional enzymatic reactions on the tRNA convert PreQ1 to queuine (Q), resulting in the hypermodified nucleoside queuosine (7-(((4,5-cis-dihydroxy-2-cyclopenten-1-yl)amino)methyl)-7-deazaguanosine).</text>
</comment>
<comment type="catalytic activity">
    <reaction evidence="1">
        <text>7-aminomethyl-7-carbaguanine + guanosine(34) in tRNA = 7-aminomethyl-7-carbaguanosine(34) in tRNA + guanine</text>
        <dbReference type="Rhea" id="RHEA:24104"/>
        <dbReference type="Rhea" id="RHEA-COMP:10341"/>
        <dbReference type="Rhea" id="RHEA-COMP:10342"/>
        <dbReference type="ChEBI" id="CHEBI:16235"/>
        <dbReference type="ChEBI" id="CHEBI:58703"/>
        <dbReference type="ChEBI" id="CHEBI:74269"/>
        <dbReference type="ChEBI" id="CHEBI:82833"/>
        <dbReference type="EC" id="2.4.2.29"/>
    </reaction>
</comment>
<comment type="cofactor">
    <cofactor evidence="1">
        <name>Zn(2+)</name>
        <dbReference type="ChEBI" id="CHEBI:29105"/>
    </cofactor>
    <text evidence="1">Binds 1 zinc ion per subunit.</text>
</comment>
<comment type="pathway">
    <text evidence="1">tRNA modification; tRNA-queuosine biosynthesis.</text>
</comment>
<comment type="subunit">
    <text evidence="1">Homodimer. Within each dimer, one monomer is responsible for RNA recognition and catalysis, while the other monomer binds to the replacement base PreQ1.</text>
</comment>
<comment type="similarity">
    <text evidence="1">Belongs to the queuine tRNA-ribosyltransferase family.</text>
</comment>
<organism>
    <name type="scientific">Yersinia pestis bv. Antiqua (strain Angola)</name>
    <dbReference type="NCBI Taxonomy" id="349746"/>
    <lineage>
        <taxon>Bacteria</taxon>
        <taxon>Pseudomonadati</taxon>
        <taxon>Pseudomonadota</taxon>
        <taxon>Gammaproteobacteria</taxon>
        <taxon>Enterobacterales</taxon>
        <taxon>Yersiniaceae</taxon>
        <taxon>Yersinia</taxon>
    </lineage>
</organism>
<sequence length="374" mass="42633">MKYELQKTDGRARRGRLVFERGVVETPAFMPVGTYGTVKGMTPEEVKETGAQILLGNTFHLWLRPGQEIMKLHGDLHDFMQWHGPILTDSGGFQVFSLGAMRKIKEEGVHFKNPINGDSVFLSPEKSMEIQYDLGSDIVMIFDECTPYPADWDYAKRSMEMSLRWAARSRQRFDELNNKNALFGIIQGGVYEDLRDVSVKGLVDIGFDGYAVGGLAVGEPKEDMHRILEHVCPQIPEDKPRYLMGVGKPEDLVEGVRRGIDMFDCVMPTRNARNGHLFVTDGVVKIRNAKHKDDTATLDEHCDCYTCRHYSRAYLHHLDRCNEILGARLNTIHNLRYYQRLMAGLRQAIEEGKLEHFVEDFYGRIGKPVPPLNV</sequence>
<evidence type="ECO:0000255" key="1">
    <source>
        <dbReference type="HAMAP-Rule" id="MF_00168"/>
    </source>
</evidence>
<reference key="1">
    <citation type="journal article" date="2010" name="J. Bacteriol.">
        <title>Genome sequence of the deep-rooted Yersinia pestis strain Angola reveals new insights into the evolution and pangenome of the plague bacterium.</title>
        <authorList>
            <person name="Eppinger M."/>
            <person name="Worsham P.L."/>
            <person name="Nikolich M.P."/>
            <person name="Riley D.R."/>
            <person name="Sebastian Y."/>
            <person name="Mou S."/>
            <person name="Achtman M."/>
            <person name="Lindler L.E."/>
            <person name="Ravel J."/>
        </authorList>
    </citation>
    <scope>NUCLEOTIDE SEQUENCE [LARGE SCALE GENOMIC DNA]</scope>
    <source>
        <strain>Angola</strain>
    </source>
</reference>
<accession>A9R351</accession>